<name>COPB_TOXGO</name>
<comment type="function">
    <text evidence="2">The coatomer is a cytosolic protein complex that binds to dilysine motifs and reversibly associates with Golgi non-clathrin-coated vesicles, which further mediate biosynthetic protein transport from the ER, via the Golgi up to the trans Golgi network. Coatomer complex is required for budding from Golgi membranes, and is essential for the retrograde Golgi-to-ER transport of dilysine-tagged proteins (By similarity).</text>
</comment>
<comment type="subunit">
    <text evidence="1">Oligomeric complex that consists of at least the alpha, beta, beta', gamma, delta, epsilon and zeta subunits.</text>
</comment>
<comment type="subcellular location">
    <subcellularLocation>
        <location evidence="4">Cytoplasm</location>
    </subcellularLocation>
    <subcellularLocation>
        <location evidence="4">Golgi apparatus membrane</location>
        <topology evidence="4">Peripheral membrane protein</topology>
        <orientation evidence="4">Cytoplasmic side</orientation>
    </subcellularLocation>
    <subcellularLocation>
        <location evidence="4">Cytoplasmic vesicle</location>
        <location evidence="4">COPI-coated vesicle membrane</location>
        <topology evidence="4">Peripheral membrane protein</topology>
        <orientation evidence="4">Cytoplasmic side</orientation>
    </subcellularLocation>
    <text evidence="2 4">The coatomer is cytoplasmic or polymerized on the cytoplasmic side of the Golgi, as well as on the vesicles/buds originating from it (By similarity). Apical juxtanuclear region.</text>
</comment>
<organism>
    <name type="scientific">Toxoplasma gondii</name>
    <dbReference type="NCBI Taxonomy" id="5811"/>
    <lineage>
        <taxon>Eukaryota</taxon>
        <taxon>Sar</taxon>
        <taxon>Alveolata</taxon>
        <taxon>Apicomplexa</taxon>
        <taxon>Conoidasida</taxon>
        <taxon>Coccidia</taxon>
        <taxon>Eucoccidiorida</taxon>
        <taxon>Eimeriorina</taxon>
        <taxon>Sarcocystidae</taxon>
        <taxon>Toxoplasma</taxon>
    </lineage>
</organism>
<reference evidence="6" key="1">
    <citation type="journal article" date="2007" name="Mol. Phylogenet. Evol.">
        <title>Molecular evolution of the vesicle coat component betaCOP in Toxoplasma gondii.</title>
        <authorList>
            <person name="Smith S.S."/>
            <person name="Pfluger S.L."/>
            <person name="Hjort E."/>
            <person name="McArthur A.G."/>
            <person name="Hager K.M."/>
        </authorList>
    </citation>
    <scope>NUCLEOTIDE SEQUENCE [MRNA]</scope>
    <source>
        <strain evidence="6">RH</strain>
    </source>
</reference>
<reference evidence="5 6" key="2">
    <citation type="journal article" date="1999" name="J. Cell Sci.">
        <title>The nuclear envelope serves as an intermediary between the ER and Golgi complex in the intracellular parasite Toxoplasma gondii.</title>
        <authorList>
            <person name="Hager K.M."/>
            <person name="Striepen B."/>
            <person name="Tilney L.G."/>
            <person name="Roos D.S."/>
        </authorList>
    </citation>
    <scope>NUCLEOTIDE SEQUENCE [MRNA] OF 911-1103</scope>
    <scope>SUBCELLULAR LOCATION</scope>
    <source>
        <strain evidence="6">RH</strain>
    </source>
</reference>
<proteinExistence type="evidence at transcript level"/>
<feature type="chain" id="PRO_0000408947" description="Coatomer subunit beta">
    <location>
        <begin position="1"/>
        <end position="1103"/>
    </location>
</feature>
<feature type="repeat" description="HEAT 1" evidence="3">
    <location>
        <begin position="51"/>
        <end position="89"/>
    </location>
</feature>
<feature type="repeat" description="HEAT 2" evidence="3">
    <location>
        <begin position="94"/>
        <end position="129"/>
    </location>
</feature>
<feature type="repeat" description="HEAT 3" evidence="3">
    <location>
        <begin position="130"/>
        <end position="166"/>
    </location>
</feature>
<feature type="repeat" description="HEAT 4" evidence="3">
    <location>
        <begin position="247"/>
        <end position="284"/>
    </location>
</feature>
<feature type="repeat" description="HEAT 5" evidence="3">
    <location>
        <begin position="322"/>
        <end position="359"/>
    </location>
</feature>
<feature type="repeat" description="HEAT 6" evidence="3">
    <location>
        <begin position="365"/>
        <end position="404"/>
    </location>
</feature>
<feature type="repeat" description="HEAT 7" evidence="3">
    <location>
        <begin position="405"/>
        <end position="441"/>
    </location>
</feature>
<evidence type="ECO:0000250" key="1">
    <source>
        <dbReference type="UniProtKB" id="A0JN39"/>
    </source>
</evidence>
<evidence type="ECO:0000250" key="2">
    <source>
        <dbReference type="UniProtKB" id="P23514"/>
    </source>
</evidence>
<evidence type="ECO:0000255" key="3"/>
<evidence type="ECO:0000269" key="4">
    <source>
    </source>
</evidence>
<evidence type="ECO:0000305" key="5"/>
<evidence type="ECO:0000312" key="6">
    <source>
        <dbReference type="EMBL" id="AAF02542.2"/>
    </source>
</evidence>
<dbReference type="EMBL" id="DQ279721">
    <property type="protein sequence ID" value="AAF02542.2"/>
    <property type="molecule type" value="mRNA"/>
</dbReference>
<dbReference type="SMR" id="Q9U4N3"/>
<dbReference type="VEuPathDB" id="ToxoDB:TGARI_266990A"/>
<dbReference type="VEuPathDB" id="ToxoDB:TGARI_266990B"/>
<dbReference type="VEuPathDB" id="ToxoDB:TGARI_266990C"/>
<dbReference type="VEuPathDB" id="ToxoDB:TGCAST_266990A"/>
<dbReference type="VEuPathDB" id="ToxoDB:TGCAST_266990B"/>
<dbReference type="VEuPathDB" id="ToxoDB:TGCOUG_266990A"/>
<dbReference type="VEuPathDB" id="ToxoDB:TGCOUG_266990B"/>
<dbReference type="VEuPathDB" id="ToxoDB:TGCOUG_392750"/>
<dbReference type="VEuPathDB" id="ToxoDB:TGDOM2_266990"/>
<dbReference type="VEuPathDB" id="ToxoDB:TGFOU_266990A"/>
<dbReference type="VEuPathDB" id="ToxoDB:TGFOU_266990B"/>
<dbReference type="VEuPathDB" id="ToxoDB:TGFOU_405410"/>
<dbReference type="VEuPathDB" id="ToxoDB:TGGT1_266990"/>
<dbReference type="VEuPathDB" id="ToxoDB:TGMAS_266990A"/>
<dbReference type="VEuPathDB" id="ToxoDB:TGMAS_266990B"/>
<dbReference type="VEuPathDB" id="ToxoDB:TGME49_266990"/>
<dbReference type="VEuPathDB" id="ToxoDB:TGP89_266990A"/>
<dbReference type="VEuPathDB" id="ToxoDB:TGP89_266990B"/>
<dbReference type="VEuPathDB" id="ToxoDB:TGPRC2_266990A"/>
<dbReference type="VEuPathDB" id="ToxoDB:TGPRC2_266990B"/>
<dbReference type="VEuPathDB" id="ToxoDB:TGPRC2_266990D"/>
<dbReference type="VEuPathDB" id="ToxoDB:TGRH88_011020"/>
<dbReference type="VEuPathDB" id="ToxoDB:TGRUB_266990A"/>
<dbReference type="VEuPathDB" id="ToxoDB:TGRUB_266990B"/>
<dbReference type="VEuPathDB" id="ToxoDB:TGVAND_266990A"/>
<dbReference type="VEuPathDB" id="ToxoDB:TGVAND_266990B"/>
<dbReference type="VEuPathDB" id="ToxoDB:TGVEG_266990"/>
<dbReference type="GO" id="GO:0030126">
    <property type="term" value="C:COPI vesicle coat"/>
    <property type="evidence" value="ECO:0007669"/>
    <property type="project" value="InterPro"/>
</dbReference>
<dbReference type="GO" id="GO:0000139">
    <property type="term" value="C:Golgi membrane"/>
    <property type="evidence" value="ECO:0007669"/>
    <property type="project" value="UniProtKB-SubCell"/>
</dbReference>
<dbReference type="GO" id="GO:0005198">
    <property type="term" value="F:structural molecule activity"/>
    <property type="evidence" value="ECO:0007669"/>
    <property type="project" value="InterPro"/>
</dbReference>
<dbReference type="GO" id="GO:0006888">
    <property type="term" value="P:endoplasmic reticulum to Golgi vesicle-mediated transport"/>
    <property type="evidence" value="ECO:0007669"/>
    <property type="project" value="TreeGrafter"/>
</dbReference>
<dbReference type="GO" id="GO:0006891">
    <property type="term" value="P:intra-Golgi vesicle-mediated transport"/>
    <property type="evidence" value="ECO:0007669"/>
    <property type="project" value="TreeGrafter"/>
</dbReference>
<dbReference type="GO" id="GO:0006886">
    <property type="term" value="P:intracellular protein transport"/>
    <property type="evidence" value="ECO:0007669"/>
    <property type="project" value="InterPro"/>
</dbReference>
<dbReference type="Gene3D" id="1.25.10.10">
    <property type="entry name" value="Leucine-rich Repeat Variant"/>
    <property type="match status" value="1"/>
</dbReference>
<dbReference type="InterPro" id="IPR011989">
    <property type="entry name" value="ARM-like"/>
</dbReference>
<dbReference type="InterPro" id="IPR016024">
    <property type="entry name" value="ARM-type_fold"/>
</dbReference>
<dbReference type="InterPro" id="IPR002553">
    <property type="entry name" value="Clathrin/coatomer_adapt-like_N"/>
</dbReference>
<dbReference type="InterPro" id="IPR011710">
    <property type="entry name" value="Coatomer_bsu_C"/>
</dbReference>
<dbReference type="InterPro" id="IPR016460">
    <property type="entry name" value="COPB1"/>
</dbReference>
<dbReference type="InterPro" id="IPR029446">
    <property type="entry name" value="COPB1_appendage_platform_dom"/>
</dbReference>
<dbReference type="PANTHER" id="PTHR10635">
    <property type="entry name" value="COATOMER SUBUNIT BETA"/>
    <property type="match status" value="1"/>
</dbReference>
<dbReference type="PANTHER" id="PTHR10635:SF0">
    <property type="entry name" value="COATOMER SUBUNIT BETA"/>
    <property type="match status" value="1"/>
</dbReference>
<dbReference type="Pfam" id="PF01602">
    <property type="entry name" value="Adaptin_N"/>
    <property type="match status" value="1"/>
</dbReference>
<dbReference type="Pfam" id="PF07718">
    <property type="entry name" value="Coatamer_beta_C"/>
    <property type="match status" value="1"/>
</dbReference>
<dbReference type="Pfam" id="PF14806">
    <property type="entry name" value="Coatomer_b_Cpla"/>
    <property type="match status" value="2"/>
</dbReference>
<dbReference type="PIRSF" id="PIRSF005727">
    <property type="entry name" value="Coatomer_beta_subunit"/>
    <property type="match status" value="1"/>
</dbReference>
<dbReference type="SUPFAM" id="SSF48371">
    <property type="entry name" value="ARM repeat"/>
    <property type="match status" value="1"/>
</dbReference>
<accession>Q9U4N3</accession>
<protein>
    <recommendedName>
        <fullName evidence="2">Coatomer subunit beta</fullName>
    </recommendedName>
    <alternativeName>
        <fullName evidence="2">Beta-coat protein</fullName>
        <shortName evidence="2">Beta-COP</shortName>
    </alternativeName>
</protein>
<sequence>MELERNCMLYIYSSRGDAPSTAELQKKIESPNEATKAEGMQDLIIGMTQGEAYTRLLMTVIRYAMPSKDKRVKKLTQLYLEIVGKCRPDGSLKEEMILICNALRNDLMSPNEYVRGSTLRLLSKIRQFKVLEPLVEAILQNLTHRHSYVRRNAVMCVYSIVKNFGLDAIPATIDQIEQMLLSEGDLTTKRNAFLVLVHCASKRAIQFILQQRSEDGTGGLGFLLSSGDLFQLALLELLRKVCRQKQQQKAGLLRLIVSILPNTLPSVAYEGACSLLALSRAPVSLKAAAGAFASLLCGNSDNNVKLIVLDRLQECVQRASRRTMEEFVIDLLRGLQTPSLEVRRKILDLVLQIVGKNSVEQLLNVLKRELLRTAEPEQLTVPRTMEYRRLLIKAVHSCCTRFPEAAASVVNVLIDFPGDPDVTTATEVAVVVRELVATCVHLRSRIISRVVDAFPDSAHARVLRVSLWMLGEFCEDSELLDSFLTAVYAACSPLPFTSGDSGGAEGEQRSGCQPKLKMTTRTVVLEDGTYGTEDVYESVNEKGDSSAKAGKTALRKFILGGDFLLASTVAVTCAKLILKTSDEVHAQLAEEFERHREAVQEKAGRRTLTGDAQARETLLERQELEGKVAPVKLRASTEQKTRVLYLVACLLKFLRLSSSGAGAHSDAAIRVCQSLRALCGLMTGLEKEKAFVRHWVHHGRFALERVLALGPVSDDPFTWNLKDAEDEKTVSAPDDLAFFRQLRPDRQSLMVASEGVAAVGEDSLEEDEIYYSACAGLARGAELEEVDETEADLQLTVGGAGGTSPSLSGGNAKDDAALFQQRLAKVQPITGQADPLYVEAFLQVNQFDLLVEMLVVNRTQDSLQNVTVEPSTHGDLKLVERPAPVSLAPGQQAVLHAPIKVRSTEAGIILGYVTFSRRGSSDKECLVLNELHIDVLDYIERRWTCELAFRSMWAEFEWENKIHVNTSFTDVSEFLEHLMKMTNLTVVGFRPPASVMRRLKFSAACAGLDEAERAAGDGEEDEDRYLQSVRKIPTLRKLSESSSFFAVNLYSRSIFGEDALVNVSIEKLPGGKLAGSIRIRSRTQGIALSLGDRITVVQRGLTK</sequence>
<keyword id="KW-0963">Cytoplasm</keyword>
<keyword id="KW-0968">Cytoplasmic vesicle</keyword>
<keyword id="KW-0931">ER-Golgi transport</keyword>
<keyword id="KW-0333">Golgi apparatus</keyword>
<keyword id="KW-0472">Membrane</keyword>
<keyword id="KW-0653">Protein transport</keyword>
<keyword id="KW-0677">Repeat</keyword>
<keyword id="KW-0813">Transport</keyword>